<proteinExistence type="inferred from homology"/>
<reference key="1">
    <citation type="journal article" date="1995" name="J. Mol. Evol.">
        <title>Sequence analysis of the complete mitochondrial DNA molecule of the hedgehog, Erinaceus europaeus, and the phylogenetic position of the Lipotyphla.</title>
        <authorList>
            <person name="Krettek A."/>
            <person name="Gullberg A."/>
            <person name="Arnason U."/>
        </authorList>
    </citation>
    <scope>NUCLEOTIDE SEQUENCE [GENOMIC DNA]</scope>
</reference>
<organism>
    <name type="scientific">Erinaceus europaeus</name>
    <name type="common">Western European hedgehog</name>
    <dbReference type="NCBI Taxonomy" id="9365"/>
    <lineage>
        <taxon>Eukaryota</taxon>
        <taxon>Metazoa</taxon>
        <taxon>Chordata</taxon>
        <taxon>Craniata</taxon>
        <taxon>Vertebrata</taxon>
        <taxon>Euteleostomi</taxon>
        <taxon>Mammalia</taxon>
        <taxon>Eutheria</taxon>
        <taxon>Laurasiatheria</taxon>
        <taxon>Eulipotyphla</taxon>
        <taxon>Erinaceidae</taxon>
        <taxon>Erinaceinae</taxon>
        <taxon>Erinaceus</taxon>
    </lineage>
</organism>
<sequence>MMNMRKTHPLMKIINNSFIDLPTPSNISSWWNFGSLLGLCLITQIITGLFLAMHYTSDTLTAFSSITHICRDVNYGWLIRYTHANGASMFFMCLFLHIGRGLYYGSYLFYETWNIGIILLIITMATAFMGYVLPWGQMSFWGATVITNLLSAIPYIGTDLVQWIWGSFSVDKATLTRFFAFHFIFPFIIVAMVMIHLLFLHEAGSNNPTGITSESDKISFHPYYTLKDMLGMMFMFLILMSLVLFYPDLLGDPDNYTPANPLSTPPHIKPEWYFLFAYAILRSIPNKLGGVLALFMSILILFLLPYLHTSKHRSMVFRPVSQCIFWLLVSDLLILTWIGSQPVENPFITIGQLASIYYFLSILILIPLAGLIENYMFKW</sequence>
<dbReference type="EMBL" id="X88898">
    <property type="protein sequence ID" value="CAA61360.1"/>
    <property type="molecule type" value="Genomic_DNA"/>
</dbReference>
<dbReference type="RefSeq" id="NP_007808.1">
    <property type="nucleotide sequence ID" value="NC_002080.2"/>
</dbReference>
<dbReference type="SMR" id="Q36368"/>
<dbReference type="STRING" id="9365.ENSEEUP00000014606"/>
<dbReference type="GeneID" id="808434"/>
<dbReference type="CTD" id="4519"/>
<dbReference type="HOGENOM" id="CLU_031114_3_0_1"/>
<dbReference type="OrthoDB" id="244at2759"/>
<dbReference type="Proteomes" id="UP000079721">
    <property type="component" value="Mitochondrion MT"/>
</dbReference>
<dbReference type="GO" id="GO:0005743">
    <property type="term" value="C:mitochondrial inner membrane"/>
    <property type="evidence" value="ECO:0007669"/>
    <property type="project" value="UniProtKB-SubCell"/>
</dbReference>
<dbReference type="GO" id="GO:0045275">
    <property type="term" value="C:respiratory chain complex III"/>
    <property type="evidence" value="ECO:0007669"/>
    <property type="project" value="InterPro"/>
</dbReference>
<dbReference type="GO" id="GO:0046872">
    <property type="term" value="F:metal ion binding"/>
    <property type="evidence" value="ECO:0007669"/>
    <property type="project" value="UniProtKB-KW"/>
</dbReference>
<dbReference type="GO" id="GO:0008121">
    <property type="term" value="F:ubiquinol-cytochrome-c reductase activity"/>
    <property type="evidence" value="ECO:0007669"/>
    <property type="project" value="InterPro"/>
</dbReference>
<dbReference type="GO" id="GO:0006122">
    <property type="term" value="P:mitochondrial electron transport, ubiquinol to cytochrome c"/>
    <property type="evidence" value="ECO:0007669"/>
    <property type="project" value="TreeGrafter"/>
</dbReference>
<dbReference type="CDD" id="cd00290">
    <property type="entry name" value="cytochrome_b_C"/>
    <property type="match status" value="1"/>
</dbReference>
<dbReference type="CDD" id="cd00284">
    <property type="entry name" value="Cytochrome_b_N"/>
    <property type="match status" value="1"/>
</dbReference>
<dbReference type="FunFam" id="1.20.810.10:FF:000002">
    <property type="entry name" value="Cytochrome b"/>
    <property type="match status" value="1"/>
</dbReference>
<dbReference type="Gene3D" id="1.20.810.10">
    <property type="entry name" value="Cytochrome Bc1 Complex, Chain C"/>
    <property type="match status" value="1"/>
</dbReference>
<dbReference type="InterPro" id="IPR005798">
    <property type="entry name" value="Cyt_b/b6_C"/>
</dbReference>
<dbReference type="InterPro" id="IPR036150">
    <property type="entry name" value="Cyt_b/b6_C_sf"/>
</dbReference>
<dbReference type="InterPro" id="IPR005797">
    <property type="entry name" value="Cyt_b/b6_N"/>
</dbReference>
<dbReference type="InterPro" id="IPR027387">
    <property type="entry name" value="Cytb/b6-like_sf"/>
</dbReference>
<dbReference type="InterPro" id="IPR030689">
    <property type="entry name" value="Cytochrome_b"/>
</dbReference>
<dbReference type="InterPro" id="IPR048260">
    <property type="entry name" value="Cytochrome_b_C_euk/bac"/>
</dbReference>
<dbReference type="InterPro" id="IPR048259">
    <property type="entry name" value="Cytochrome_b_N_euk/bac"/>
</dbReference>
<dbReference type="InterPro" id="IPR016174">
    <property type="entry name" value="Di-haem_cyt_TM"/>
</dbReference>
<dbReference type="PANTHER" id="PTHR19271">
    <property type="entry name" value="CYTOCHROME B"/>
    <property type="match status" value="1"/>
</dbReference>
<dbReference type="PANTHER" id="PTHR19271:SF16">
    <property type="entry name" value="CYTOCHROME B"/>
    <property type="match status" value="1"/>
</dbReference>
<dbReference type="Pfam" id="PF00032">
    <property type="entry name" value="Cytochrom_B_C"/>
    <property type="match status" value="1"/>
</dbReference>
<dbReference type="Pfam" id="PF00033">
    <property type="entry name" value="Cytochrome_B"/>
    <property type="match status" value="1"/>
</dbReference>
<dbReference type="PIRSF" id="PIRSF038885">
    <property type="entry name" value="COB"/>
    <property type="match status" value="1"/>
</dbReference>
<dbReference type="SUPFAM" id="SSF81648">
    <property type="entry name" value="a domain/subunit of cytochrome bc1 complex (Ubiquinol-cytochrome c reductase)"/>
    <property type="match status" value="1"/>
</dbReference>
<dbReference type="SUPFAM" id="SSF81342">
    <property type="entry name" value="Transmembrane di-heme cytochromes"/>
    <property type="match status" value="1"/>
</dbReference>
<dbReference type="PROSITE" id="PS51003">
    <property type="entry name" value="CYTB_CTER"/>
    <property type="match status" value="1"/>
</dbReference>
<dbReference type="PROSITE" id="PS51002">
    <property type="entry name" value="CYTB_NTER"/>
    <property type="match status" value="1"/>
</dbReference>
<keyword id="KW-0249">Electron transport</keyword>
<keyword id="KW-0349">Heme</keyword>
<keyword id="KW-0408">Iron</keyword>
<keyword id="KW-0472">Membrane</keyword>
<keyword id="KW-0479">Metal-binding</keyword>
<keyword id="KW-0496">Mitochondrion</keyword>
<keyword id="KW-0999">Mitochondrion inner membrane</keyword>
<keyword id="KW-1185">Reference proteome</keyword>
<keyword id="KW-0679">Respiratory chain</keyword>
<keyword id="KW-0812">Transmembrane</keyword>
<keyword id="KW-1133">Transmembrane helix</keyword>
<keyword id="KW-0813">Transport</keyword>
<keyword id="KW-0830">Ubiquinone</keyword>
<evidence type="ECO:0000250" key="1"/>
<evidence type="ECO:0000250" key="2">
    <source>
        <dbReference type="UniProtKB" id="P00157"/>
    </source>
</evidence>
<evidence type="ECO:0000255" key="3">
    <source>
        <dbReference type="PROSITE-ProRule" id="PRU00967"/>
    </source>
</evidence>
<evidence type="ECO:0000255" key="4">
    <source>
        <dbReference type="PROSITE-ProRule" id="PRU00968"/>
    </source>
</evidence>
<accession>Q36368</accession>
<feature type="chain" id="PRO_0000060940" description="Cytochrome b">
    <location>
        <begin position="1"/>
        <end position="379"/>
    </location>
</feature>
<feature type="transmembrane region" description="Helical" evidence="2">
    <location>
        <begin position="33"/>
        <end position="53"/>
    </location>
</feature>
<feature type="transmembrane region" description="Helical" evidence="2">
    <location>
        <begin position="77"/>
        <end position="98"/>
    </location>
</feature>
<feature type="transmembrane region" description="Helical" evidence="2">
    <location>
        <begin position="113"/>
        <end position="133"/>
    </location>
</feature>
<feature type="transmembrane region" description="Helical" evidence="2">
    <location>
        <begin position="178"/>
        <end position="198"/>
    </location>
</feature>
<feature type="transmembrane region" description="Helical" evidence="2">
    <location>
        <begin position="226"/>
        <end position="246"/>
    </location>
</feature>
<feature type="transmembrane region" description="Helical" evidence="2">
    <location>
        <begin position="288"/>
        <end position="308"/>
    </location>
</feature>
<feature type="transmembrane region" description="Helical" evidence="2">
    <location>
        <begin position="320"/>
        <end position="340"/>
    </location>
</feature>
<feature type="transmembrane region" description="Helical" evidence="2">
    <location>
        <begin position="347"/>
        <end position="367"/>
    </location>
</feature>
<feature type="binding site" description="axial binding residue" evidence="2">
    <location>
        <position position="83"/>
    </location>
    <ligand>
        <name>heme b</name>
        <dbReference type="ChEBI" id="CHEBI:60344"/>
        <label>b562</label>
    </ligand>
    <ligandPart>
        <name>Fe</name>
        <dbReference type="ChEBI" id="CHEBI:18248"/>
    </ligandPart>
</feature>
<feature type="binding site" description="axial binding residue" evidence="2">
    <location>
        <position position="97"/>
    </location>
    <ligand>
        <name>heme b</name>
        <dbReference type="ChEBI" id="CHEBI:60344"/>
        <label>b566</label>
    </ligand>
    <ligandPart>
        <name>Fe</name>
        <dbReference type="ChEBI" id="CHEBI:18248"/>
    </ligandPart>
</feature>
<feature type="binding site" description="axial binding residue" evidence="2">
    <location>
        <position position="182"/>
    </location>
    <ligand>
        <name>heme b</name>
        <dbReference type="ChEBI" id="CHEBI:60344"/>
        <label>b562</label>
    </ligand>
    <ligandPart>
        <name>Fe</name>
        <dbReference type="ChEBI" id="CHEBI:18248"/>
    </ligandPart>
</feature>
<feature type="binding site" description="axial binding residue" evidence="2">
    <location>
        <position position="196"/>
    </location>
    <ligand>
        <name>heme b</name>
        <dbReference type="ChEBI" id="CHEBI:60344"/>
        <label>b566</label>
    </ligand>
    <ligandPart>
        <name>Fe</name>
        <dbReference type="ChEBI" id="CHEBI:18248"/>
    </ligandPart>
</feature>
<feature type="binding site" evidence="2">
    <location>
        <position position="201"/>
    </location>
    <ligand>
        <name>a ubiquinone</name>
        <dbReference type="ChEBI" id="CHEBI:16389"/>
    </ligand>
</feature>
<comment type="function">
    <text evidence="2">Component of the ubiquinol-cytochrome c reductase complex (complex III or cytochrome b-c1 complex) that is part of the mitochondrial respiratory chain. The b-c1 complex mediates electron transfer from ubiquinol to cytochrome c. Contributes to the generation of a proton gradient across the mitochondrial membrane that is then used for ATP synthesis.</text>
</comment>
<comment type="cofactor">
    <cofactor evidence="2">
        <name>heme b</name>
        <dbReference type="ChEBI" id="CHEBI:60344"/>
    </cofactor>
    <text evidence="2">Binds 2 heme b groups non-covalently.</text>
</comment>
<comment type="subunit">
    <text evidence="2">The cytochrome bc1 complex contains 11 subunits: 3 respiratory subunits (MT-CYB, CYC1 and UQCRFS1), 2 core proteins (UQCRC1 and UQCRC2) and 6 low-molecular weight proteins (UQCRH/QCR6, UQCRB/QCR7, UQCRQ/QCR8, UQCR10/QCR9, UQCR11/QCR10 and a cleavage product of UQCRFS1). This cytochrome bc1 complex then forms a dimer.</text>
</comment>
<comment type="subcellular location">
    <subcellularLocation>
        <location evidence="2">Mitochondrion inner membrane</location>
        <topology evidence="2">Multi-pass membrane protein</topology>
    </subcellularLocation>
</comment>
<comment type="miscellaneous">
    <text evidence="1">Heme 1 (or BL or b562) is low-potential and absorbs at about 562 nm, and heme 2 (or BH or b566) is high-potential and absorbs at about 566 nm.</text>
</comment>
<comment type="similarity">
    <text evidence="3 4">Belongs to the cytochrome b family.</text>
</comment>
<comment type="caution">
    <text evidence="2">The full-length protein contains only eight transmembrane helices, not nine as predicted by bioinformatics tools.</text>
</comment>
<geneLocation type="mitochondrion"/>
<name>CYB_ERIEU</name>
<gene>
    <name type="primary">MT-CYB</name>
    <name type="synonym">COB</name>
    <name type="synonym">CYTB</name>
    <name type="synonym">MTCYB</name>
</gene>
<protein>
    <recommendedName>
        <fullName>Cytochrome b</fullName>
    </recommendedName>
    <alternativeName>
        <fullName>Complex III subunit 3</fullName>
    </alternativeName>
    <alternativeName>
        <fullName>Complex III subunit III</fullName>
    </alternativeName>
    <alternativeName>
        <fullName>Cytochrome b-c1 complex subunit 3</fullName>
    </alternativeName>
    <alternativeName>
        <fullName>Ubiquinol-cytochrome-c reductase complex cytochrome b subunit</fullName>
    </alternativeName>
</protein>